<feature type="chain" id="PRO_0000195104" description="Aspartate/glutamate leucyltransferase">
    <location>
        <begin position="1"/>
        <end position="241"/>
    </location>
</feature>
<reference key="1">
    <citation type="journal article" date="2003" name="Proc. Natl. Acad. Sci. U.S.A.">
        <title>The complete genome sequence of the carcinogenic bacterium Helicobacter hepaticus.</title>
        <authorList>
            <person name="Suerbaum S."/>
            <person name="Josenhans C."/>
            <person name="Sterzenbach T."/>
            <person name="Drescher B."/>
            <person name="Brandt P."/>
            <person name="Bell M."/>
            <person name="Droege M."/>
            <person name="Fartmann B."/>
            <person name="Fischer H.-P."/>
            <person name="Ge Z."/>
            <person name="Hoerster A."/>
            <person name="Holland R."/>
            <person name="Klein K."/>
            <person name="Koenig J."/>
            <person name="Macko L."/>
            <person name="Mendz G.L."/>
            <person name="Nyakatura G."/>
            <person name="Schauer D.B."/>
            <person name="Shen Z."/>
            <person name="Weber J."/>
            <person name="Frosch M."/>
            <person name="Fox J.G."/>
        </authorList>
    </citation>
    <scope>NUCLEOTIDE SEQUENCE [LARGE SCALE GENOMIC DNA]</scope>
    <source>
        <strain>ATCC 51449 / 3B1</strain>
    </source>
</reference>
<proteinExistence type="inferred from homology"/>
<sequence length="241" mass="28906">MRLVEFYSEKKVCSYIDSKQSIFRYFHIQNVTPSFYYGLLERGWRRFGNYFFTPMCEGCTDCISIRTLIDDFTFSRNHKRLLKKAQNIDIYIQKPTITQAHIELYNRYHRVMRDKKGWEYTPTTPESYMDMFVEGHQDFGYEILYFIDSQLVGVGLVDALFDSITAVYFYYDHTFAHHSLGTLNILKQIQIGKENGLKYFYPGYWIKDHYCMGYKQRFTPFEVLKNIPDVFEAPIWEMYNG</sequence>
<gene>
    <name evidence="1" type="primary">bpt</name>
    <name type="ordered locus">HH_1829</name>
</gene>
<dbReference type="EC" id="2.3.2.29" evidence="1"/>
<dbReference type="EMBL" id="AE017125">
    <property type="protein sequence ID" value="AAP78426.1"/>
    <property type="molecule type" value="Genomic_DNA"/>
</dbReference>
<dbReference type="RefSeq" id="WP_011116668.1">
    <property type="nucleotide sequence ID" value="NC_004917.1"/>
</dbReference>
<dbReference type="SMR" id="P59794"/>
<dbReference type="STRING" id="235279.HH_1829"/>
<dbReference type="KEGG" id="hhe:HH_1829"/>
<dbReference type="eggNOG" id="COG2935">
    <property type="taxonomic scope" value="Bacteria"/>
</dbReference>
<dbReference type="HOGENOM" id="CLU_077607_0_0_7"/>
<dbReference type="OrthoDB" id="9782022at2"/>
<dbReference type="Proteomes" id="UP000002495">
    <property type="component" value="Chromosome"/>
</dbReference>
<dbReference type="GO" id="GO:0005737">
    <property type="term" value="C:cytoplasm"/>
    <property type="evidence" value="ECO:0007669"/>
    <property type="project" value="UniProtKB-SubCell"/>
</dbReference>
<dbReference type="GO" id="GO:0004057">
    <property type="term" value="F:arginyl-tRNA--protein transferase activity"/>
    <property type="evidence" value="ECO:0007669"/>
    <property type="project" value="InterPro"/>
</dbReference>
<dbReference type="GO" id="GO:0008914">
    <property type="term" value="F:leucyl-tRNA--protein transferase activity"/>
    <property type="evidence" value="ECO:0007669"/>
    <property type="project" value="UniProtKB-UniRule"/>
</dbReference>
<dbReference type="GO" id="GO:0071596">
    <property type="term" value="P:ubiquitin-dependent protein catabolic process via the N-end rule pathway"/>
    <property type="evidence" value="ECO:0007669"/>
    <property type="project" value="InterPro"/>
</dbReference>
<dbReference type="Gene3D" id="3.40.630.30">
    <property type="match status" value="1"/>
</dbReference>
<dbReference type="HAMAP" id="MF_00689">
    <property type="entry name" value="Bpt"/>
    <property type="match status" value="1"/>
</dbReference>
<dbReference type="InterPro" id="IPR016181">
    <property type="entry name" value="Acyl_CoA_acyltransferase"/>
</dbReference>
<dbReference type="InterPro" id="IPR017138">
    <property type="entry name" value="Asp_Glu_LeuTrfase"/>
</dbReference>
<dbReference type="InterPro" id="IPR030700">
    <property type="entry name" value="N-end_Aminoacyl_Trfase"/>
</dbReference>
<dbReference type="InterPro" id="IPR007472">
    <property type="entry name" value="N-end_Aminoacyl_Trfase_C"/>
</dbReference>
<dbReference type="InterPro" id="IPR007471">
    <property type="entry name" value="N-end_Aminoacyl_Trfase_N"/>
</dbReference>
<dbReference type="NCBIfam" id="NF002344">
    <property type="entry name" value="PRK01305.2-1"/>
    <property type="match status" value="1"/>
</dbReference>
<dbReference type="NCBIfam" id="NF002346">
    <property type="entry name" value="PRK01305.2-3"/>
    <property type="match status" value="1"/>
</dbReference>
<dbReference type="PANTHER" id="PTHR21367">
    <property type="entry name" value="ARGININE-TRNA-PROTEIN TRANSFERASE 1"/>
    <property type="match status" value="1"/>
</dbReference>
<dbReference type="PANTHER" id="PTHR21367:SF1">
    <property type="entry name" value="ARGINYL-TRNA--PROTEIN TRANSFERASE 1"/>
    <property type="match status" value="1"/>
</dbReference>
<dbReference type="Pfam" id="PF04377">
    <property type="entry name" value="ATE_C"/>
    <property type="match status" value="1"/>
</dbReference>
<dbReference type="Pfam" id="PF04376">
    <property type="entry name" value="ATE_N"/>
    <property type="match status" value="1"/>
</dbReference>
<dbReference type="PIRSF" id="PIRSF037208">
    <property type="entry name" value="ATE_pro_prd"/>
    <property type="match status" value="1"/>
</dbReference>
<dbReference type="SUPFAM" id="SSF55729">
    <property type="entry name" value="Acyl-CoA N-acyltransferases (Nat)"/>
    <property type="match status" value="1"/>
</dbReference>
<comment type="function">
    <text evidence="1">Functions in the N-end rule pathway of protein degradation where it conjugates Leu from its aminoacyl-tRNA to the N-termini of proteins containing an N-terminal aspartate or glutamate.</text>
</comment>
<comment type="catalytic activity">
    <reaction evidence="1">
        <text>N-terminal L-glutamyl-[protein] + L-leucyl-tRNA(Leu) = N-terminal L-leucyl-L-glutamyl-[protein] + tRNA(Leu) + H(+)</text>
        <dbReference type="Rhea" id="RHEA:50412"/>
        <dbReference type="Rhea" id="RHEA-COMP:9613"/>
        <dbReference type="Rhea" id="RHEA-COMP:9622"/>
        <dbReference type="Rhea" id="RHEA-COMP:12664"/>
        <dbReference type="Rhea" id="RHEA-COMP:12668"/>
        <dbReference type="ChEBI" id="CHEBI:15378"/>
        <dbReference type="ChEBI" id="CHEBI:64721"/>
        <dbReference type="ChEBI" id="CHEBI:78442"/>
        <dbReference type="ChEBI" id="CHEBI:78494"/>
        <dbReference type="ChEBI" id="CHEBI:133041"/>
        <dbReference type="EC" id="2.3.2.29"/>
    </reaction>
</comment>
<comment type="catalytic activity">
    <reaction evidence="1">
        <text>N-terminal L-aspartyl-[protein] + L-leucyl-tRNA(Leu) = N-terminal L-leucyl-L-aspartyl-[protein] + tRNA(Leu) + H(+)</text>
        <dbReference type="Rhea" id="RHEA:50420"/>
        <dbReference type="Rhea" id="RHEA-COMP:9613"/>
        <dbReference type="Rhea" id="RHEA-COMP:9622"/>
        <dbReference type="Rhea" id="RHEA-COMP:12669"/>
        <dbReference type="Rhea" id="RHEA-COMP:12674"/>
        <dbReference type="ChEBI" id="CHEBI:15378"/>
        <dbReference type="ChEBI" id="CHEBI:64720"/>
        <dbReference type="ChEBI" id="CHEBI:78442"/>
        <dbReference type="ChEBI" id="CHEBI:78494"/>
        <dbReference type="ChEBI" id="CHEBI:133042"/>
        <dbReference type="EC" id="2.3.2.29"/>
    </reaction>
</comment>
<comment type="subcellular location">
    <subcellularLocation>
        <location evidence="1">Cytoplasm</location>
    </subcellularLocation>
</comment>
<comment type="similarity">
    <text evidence="1">Belongs to the R-transferase family. Bpt subfamily.</text>
</comment>
<name>BPT_HELHP</name>
<accession>P59794</accession>
<protein>
    <recommendedName>
        <fullName evidence="1">Aspartate/glutamate leucyltransferase</fullName>
        <ecNumber evidence="1">2.3.2.29</ecNumber>
    </recommendedName>
</protein>
<keyword id="KW-0012">Acyltransferase</keyword>
<keyword id="KW-0963">Cytoplasm</keyword>
<keyword id="KW-1185">Reference proteome</keyword>
<keyword id="KW-0808">Transferase</keyword>
<evidence type="ECO:0000255" key="1">
    <source>
        <dbReference type="HAMAP-Rule" id="MF_00689"/>
    </source>
</evidence>
<organism>
    <name type="scientific">Helicobacter hepaticus (strain ATCC 51449 / 3B1)</name>
    <dbReference type="NCBI Taxonomy" id="235279"/>
    <lineage>
        <taxon>Bacteria</taxon>
        <taxon>Pseudomonadati</taxon>
        <taxon>Campylobacterota</taxon>
        <taxon>Epsilonproteobacteria</taxon>
        <taxon>Campylobacterales</taxon>
        <taxon>Helicobacteraceae</taxon>
        <taxon>Helicobacter</taxon>
    </lineage>
</organism>